<reference key="1">
    <citation type="journal article" date="2008" name="Genome Biol.">
        <title>A genomic analysis of the archaeal system Ignicoccus hospitalis-Nanoarchaeum equitans.</title>
        <authorList>
            <person name="Podar M."/>
            <person name="Anderson I."/>
            <person name="Makarova K.S."/>
            <person name="Elkins J.G."/>
            <person name="Ivanova N."/>
            <person name="Wall M.A."/>
            <person name="Lykidis A."/>
            <person name="Mavromatis K."/>
            <person name="Sun H."/>
            <person name="Hudson M.E."/>
            <person name="Chen W."/>
            <person name="Deciu C."/>
            <person name="Hutchison D."/>
            <person name="Eads J.R."/>
            <person name="Anderson A."/>
            <person name="Fernandes F."/>
            <person name="Szeto E."/>
            <person name="Lapidus A."/>
            <person name="Kyrpides N.C."/>
            <person name="Saier M.H. Jr."/>
            <person name="Richardson P.M."/>
            <person name="Rachel R."/>
            <person name="Huber H."/>
            <person name="Eisen J.A."/>
            <person name="Koonin E.V."/>
            <person name="Keller M."/>
            <person name="Stetter K.O."/>
        </authorList>
    </citation>
    <scope>NUCLEOTIDE SEQUENCE [LARGE SCALE GENOMIC DNA]</scope>
    <source>
        <strain>KIN4/I / DSM 18386 / JCM 14125</strain>
    </source>
</reference>
<gene>
    <name evidence="1" type="primary">kae1</name>
    <name type="ordered locus">Igni_0266</name>
</gene>
<evidence type="ECO:0000255" key="1">
    <source>
        <dbReference type="HAMAP-Rule" id="MF_01446"/>
    </source>
</evidence>
<organism>
    <name type="scientific">Ignicoccus hospitalis (strain KIN4/I / DSM 18386 / JCM 14125)</name>
    <dbReference type="NCBI Taxonomy" id="453591"/>
    <lineage>
        <taxon>Archaea</taxon>
        <taxon>Thermoproteota</taxon>
        <taxon>Thermoprotei</taxon>
        <taxon>Desulfurococcales</taxon>
        <taxon>Desulfurococcaceae</taxon>
        <taxon>Ignicoccus</taxon>
    </lineage>
</organism>
<comment type="function">
    <text evidence="1">Required for the formation of a threonylcarbamoyl group on adenosine at position 37 (t(6)A37) in tRNAs that read codons beginning with adenine. Is probably involved in the transfer of the threonylcarbamoyl moiety of threonylcarbamoyl-AMP (TC-AMP) to the N6 group of A37.</text>
</comment>
<comment type="catalytic activity">
    <reaction evidence="1">
        <text>L-threonylcarbamoyladenylate + adenosine(37) in tRNA = N(6)-L-threonylcarbamoyladenosine(37) in tRNA + AMP + H(+)</text>
        <dbReference type="Rhea" id="RHEA:37059"/>
        <dbReference type="Rhea" id="RHEA-COMP:10162"/>
        <dbReference type="Rhea" id="RHEA-COMP:10163"/>
        <dbReference type="ChEBI" id="CHEBI:15378"/>
        <dbReference type="ChEBI" id="CHEBI:73682"/>
        <dbReference type="ChEBI" id="CHEBI:74411"/>
        <dbReference type="ChEBI" id="CHEBI:74418"/>
        <dbReference type="ChEBI" id="CHEBI:456215"/>
        <dbReference type="EC" id="2.3.1.234"/>
    </reaction>
</comment>
<comment type="cofactor">
    <cofactor evidence="1">
        <name>Fe(2+)</name>
        <dbReference type="ChEBI" id="CHEBI:29033"/>
    </cofactor>
    <text evidence="1">Binds 1 Fe(2+) ion per subunit.</text>
</comment>
<comment type="subcellular location">
    <subcellularLocation>
        <location evidence="1">Cytoplasm</location>
    </subcellularLocation>
</comment>
<comment type="similarity">
    <text evidence="1">Belongs to the KAE1 / TsaD family.</text>
</comment>
<dbReference type="EC" id="2.3.1.234" evidence="1"/>
<dbReference type="EMBL" id="CP000816">
    <property type="protein sequence ID" value="ABU81450.1"/>
    <property type="molecule type" value="Genomic_DNA"/>
</dbReference>
<dbReference type="RefSeq" id="WP_011998302.1">
    <property type="nucleotide sequence ID" value="NC_009776.1"/>
</dbReference>
<dbReference type="SMR" id="A8A948"/>
<dbReference type="STRING" id="453591.Igni_0266"/>
<dbReference type="GeneID" id="5561741"/>
<dbReference type="KEGG" id="iho:Igni_0266"/>
<dbReference type="eggNOG" id="arCOG01183">
    <property type="taxonomic scope" value="Archaea"/>
</dbReference>
<dbReference type="HOGENOM" id="CLU_023208_2_2_2"/>
<dbReference type="OrthoDB" id="6818at2157"/>
<dbReference type="PhylomeDB" id="A8A948"/>
<dbReference type="Proteomes" id="UP000000262">
    <property type="component" value="Chromosome"/>
</dbReference>
<dbReference type="GO" id="GO:0005737">
    <property type="term" value="C:cytoplasm"/>
    <property type="evidence" value="ECO:0007669"/>
    <property type="project" value="UniProtKB-SubCell"/>
</dbReference>
<dbReference type="GO" id="GO:0000408">
    <property type="term" value="C:EKC/KEOPS complex"/>
    <property type="evidence" value="ECO:0007669"/>
    <property type="project" value="InterPro"/>
</dbReference>
<dbReference type="GO" id="GO:0005506">
    <property type="term" value="F:iron ion binding"/>
    <property type="evidence" value="ECO:0007669"/>
    <property type="project" value="UniProtKB-UniRule"/>
</dbReference>
<dbReference type="GO" id="GO:0061711">
    <property type="term" value="F:N(6)-L-threonylcarbamoyladenine synthase activity"/>
    <property type="evidence" value="ECO:0007669"/>
    <property type="project" value="UniProtKB-EC"/>
</dbReference>
<dbReference type="GO" id="GO:0002949">
    <property type="term" value="P:tRNA threonylcarbamoyladenosine modification"/>
    <property type="evidence" value="ECO:0007669"/>
    <property type="project" value="UniProtKB-UniRule"/>
</dbReference>
<dbReference type="FunFam" id="3.30.420.40:FF:000037">
    <property type="entry name" value="Probable tRNA N6-adenosine threonylcarbamoyltransferase"/>
    <property type="match status" value="1"/>
</dbReference>
<dbReference type="Gene3D" id="3.30.420.40">
    <property type="match status" value="2"/>
</dbReference>
<dbReference type="HAMAP" id="MF_01446">
    <property type="entry name" value="Kae1"/>
    <property type="match status" value="1"/>
</dbReference>
<dbReference type="InterPro" id="IPR043129">
    <property type="entry name" value="ATPase_NBD"/>
</dbReference>
<dbReference type="InterPro" id="IPR000905">
    <property type="entry name" value="Gcp-like_dom"/>
</dbReference>
<dbReference type="InterPro" id="IPR017861">
    <property type="entry name" value="KAE1/TsaD"/>
</dbReference>
<dbReference type="InterPro" id="IPR034680">
    <property type="entry name" value="Kae1_archaea_euk"/>
</dbReference>
<dbReference type="NCBIfam" id="TIGR03722">
    <property type="entry name" value="arch_KAE1"/>
    <property type="match status" value="1"/>
</dbReference>
<dbReference type="NCBIfam" id="TIGR00329">
    <property type="entry name" value="gcp_kae1"/>
    <property type="match status" value="1"/>
</dbReference>
<dbReference type="PANTHER" id="PTHR11735">
    <property type="entry name" value="TRNA N6-ADENOSINE THREONYLCARBAMOYLTRANSFERASE"/>
    <property type="match status" value="1"/>
</dbReference>
<dbReference type="PANTHER" id="PTHR11735:SF14">
    <property type="entry name" value="TRNA N6-ADENOSINE THREONYLCARBAMOYLTRANSFERASE"/>
    <property type="match status" value="1"/>
</dbReference>
<dbReference type="Pfam" id="PF00814">
    <property type="entry name" value="TsaD"/>
    <property type="match status" value="1"/>
</dbReference>
<dbReference type="PRINTS" id="PR00789">
    <property type="entry name" value="OSIALOPTASE"/>
</dbReference>
<dbReference type="SUPFAM" id="SSF53067">
    <property type="entry name" value="Actin-like ATPase domain"/>
    <property type="match status" value="1"/>
</dbReference>
<proteinExistence type="inferred from homology"/>
<sequence>MYVLGIESTAHTIGVGIVNERAEVLANEMHTYVPKEGGIHPREAARHHAEWGPRLVKRALEVAGLRPEDLDAVAYSAGPGLGPCLRTGAVMARALAAFYEKPLVPVNHSLAHIEIARAVTGFSKPVAIYVSGGSTIISAPAIKRYRVYGETLDIGLGNLLDTFAREVGIGPPFVKGGVHVVELCSEGAEEPADLPYTVQGVDLSFSGLLTAALRAWKKEDKKKVCYGLWETAYDMVVEVGERALAHSKLKEVVLVGGVAGSKRLQRKVALMSEERGVSFKPIPYELARDNGAMIAWTGLLYYKHGFTVAPEEAFVRQRWRLDEVEVPWL</sequence>
<accession>A8A948</accession>
<protein>
    <recommendedName>
        <fullName evidence="1">tRNA N6-adenosine threonylcarbamoyltransferase</fullName>
        <ecNumber evidence="1">2.3.1.234</ecNumber>
    </recommendedName>
    <alternativeName>
        <fullName evidence="1">N6-L-threonylcarbamoyladenine synthase</fullName>
        <shortName evidence="1">t(6)A synthase</shortName>
    </alternativeName>
    <alternativeName>
        <fullName evidence="1">t(6)A37 threonylcarbamoyladenosine biosynthesis protein Kae1</fullName>
    </alternativeName>
    <alternativeName>
        <fullName evidence="1">tRNA threonylcarbamoyladenosine biosynthesis protein Kae1</fullName>
    </alternativeName>
</protein>
<keyword id="KW-0012">Acyltransferase</keyword>
<keyword id="KW-0963">Cytoplasm</keyword>
<keyword id="KW-0408">Iron</keyword>
<keyword id="KW-0479">Metal-binding</keyword>
<keyword id="KW-1185">Reference proteome</keyword>
<keyword id="KW-0808">Transferase</keyword>
<keyword id="KW-0819">tRNA processing</keyword>
<name>KAE1_IGNH4</name>
<feature type="chain" id="PRO_1000024463" description="tRNA N6-adenosine threonylcarbamoyltransferase">
    <location>
        <begin position="1"/>
        <end position="329"/>
    </location>
</feature>
<feature type="binding site" evidence="1">
    <location>
        <position position="108"/>
    </location>
    <ligand>
        <name>Fe cation</name>
        <dbReference type="ChEBI" id="CHEBI:24875"/>
    </ligand>
</feature>
<feature type="binding site" evidence="1">
    <location>
        <position position="112"/>
    </location>
    <ligand>
        <name>Fe cation</name>
        <dbReference type="ChEBI" id="CHEBI:24875"/>
    </ligand>
</feature>
<feature type="binding site" evidence="1">
    <location>
        <begin position="129"/>
        <end position="133"/>
    </location>
    <ligand>
        <name>substrate</name>
    </ligand>
</feature>
<feature type="binding site" evidence="1">
    <location>
        <position position="129"/>
    </location>
    <ligand>
        <name>Fe cation</name>
        <dbReference type="ChEBI" id="CHEBI:24875"/>
    </ligand>
</feature>
<feature type="binding site" evidence="1">
    <location>
        <position position="161"/>
    </location>
    <ligand>
        <name>substrate</name>
    </ligand>
</feature>
<feature type="binding site" evidence="1">
    <location>
        <position position="182"/>
    </location>
    <ligand>
        <name>substrate</name>
    </ligand>
</feature>
<feature type="binding site" evidence="1">
    <location>
        <position position="261"/>
    </location>
    <ligand>
        <name>substrate</name>
    </ligand>
</feature>
<feature type="binding site" evidence="1">
    <location>
        <position position="289"/>
    </location>
    <ligand>
        <name>Fe cation</name>
        <dbReference type="ChEBI" id="CHEBI:24875"/>
    </ligand>
</feature>